<feature type="chain" id="PRO_0000169141" description="Inner membrane protein YohK">
    <location>
        <begin position="1"/>
        <end position="231"/>
    </location>
</feature>
<feature type="topological domain" description="Periplasmic" evidence="2">
    <location>
        <position position="1"/>
    </location>
</feature>
<feature type="transmembrane region" description="Helical" evidence="2">
    <location>
        <begin position="2"/>
        <end position="22"/>
    </location>
</feature>
<feature type="topological domain" description="Cytoplasmic" evidence="2">
    <location>
        <begin position="23"/>
        <end position="29"/>
    </location>
</feature>
<feature type="transmembrane region" description="Helical" evidence="2">
    <location>
        <begin position="30"/>
        <end position="50"/>
    </location>
</feature>
<feature type="topological domain" description="Periplasmic" evidence="2">
    <location>
        <begin position="51"/>
        <end position="90"/>
    </location>
</feature>
<feature type="transmembrane region" description="Helical" evidence="2">
    <location>
        <begin position="91"/>
        <end position="111"/>
    </location>
</feature>
<feature type="topological domain" description="Cytoplasmic" evidence="2">
    <location>
        <begin position="112"/>
        <end position="118"/>
    </location>
</feature>
<feature type="transmembrane region" description="Helical" evidence="2">
    <location>
        <begin position="119"/>
        <end position="139"/>
    </location>
</feature>
<feature type="transmembrane region" description="Helical" evidence="2">
    <location>
        <begin position="140"/>
        <end position="160"/>
    </location>
</feature>
<feature type="topological domain" description="Cytoplasmic" evidence="2">
    <location>
        <begin position="161"/>
        <end position="208"/>
    </location>
</feature>
<feature type="transmembrane region" description="Helical" evidence="2">
    <location>
        <begin position="209"/>
        <end position="229"/>
    </location>
</feature>
<feature type="topological domain" description="Periplasmic" evidence="2">
    <location>
        <begin position="230"/>
        <end position="231"/>
    </location>
</feature>
<name>YOHK_SHIFL</name>
<sequence length="231" mass="24470">MMANIWWSLPLTLIVFFAARKLAARYKFPLLNPLLVAMVVIIPFLMLTGISYDSYFKGSEVLNDLLQPAVVALAYPLYEQLHQIRARWKSIITICFIGSVVAMVTGTSVALLMGASPEIAASILPKSVTTPIAMAVGGSIGGIPAISAVCVIFVGILGAVFGHTLLNAMRIRTKAARGLAMGTASHALGTARCAELDYQEGAFSSLALVLCGIITSLIAPFLFPIILAVMG</sequence>
<proteinExistence type="inferred from homology"/>
<evidence type="ECO:0000250" key="1"/>
<evidence type="ECO:0000255" key="2"/>
<evidence type="ECO:0000305" key="3"/>
<reference key="1">
    <citation type="journal article" date="2002" name="Nucleic Acids Res.">
        <title>Genome sequence of Shigella flexneri 2a: insights into pathogenicity through comparison with genomes of Escherichia coli K12 and O157.</title>
        <authorList>
            <person name="Jin Q."/>
            <person name="Yuan Z."/>
            <person name="Xu J."/>
            <person name="Wang Y."/>
            <person name="Shen Y."/>
            <person name="Lu W."/>
            <person name="Wang J."/>
            <person name="Liu H."/>
            <person name="Yang J."/>
            <person name="Yang F."/>
            <person name="Zhang X."/>
            <person name="Zhang J."/>
            <person name="Yang G."/>
            <person name="Wu H."/>
            <person name="Qu D."/>
            <person name="Dong J."/>
            <person name="Sun L."/>
            <person name="Xue Y."/>
            <person name="Zhao A."/>
            <person name="Gao Y."/>
            <person name="Zhu J."/>
            <person name="Kan B."/>
            <person name="Ding K."/>
            <person name="Chen S."/>
            <person name="Cheng H."/>
            <person name="Yao Z."/>
            <person name="He B."/>
            <person name="Chen R."/>
            <person name="Ma D."/>
            <person name="Qiang B."/>
            <person name="Wen Y."/>
            <person name="Hou Y."/>
            <person name="Yu J."/>
        </authorList>
    </citation>
    <scope>NUCLEOTIDE SEQUENCE [LARGE SCALE GENOMIC DNA]</scope>
    <source>
        <strain>301 / Serotype 2a</strain>
    </source>
</reference>
<reference key="2">
    <citation type="journal article" date="2003" name="Infect. Immun.">
        <title>Complete genome sequence and comparative genomics of Shigella flexneri serotype 2a strain 2457T.</title>
        <authorList>
            <person name="Wei J."/>
            <person name="Goldberg M.B."/>
            <person name="Burland V."/>
            <person name="Venkatesan M.M."/>
            <person name="Deng W."/>
            <person name="Fournier G."/>
            <person name="Mayhew G.F."/>
            <person name="Plunkett G. III"/>
            <person name="Rose D.J."/>
            <person name="Darling A."/>
            <person name="Mau B."/>
            <person name="Perna N.T."/>
            <person name="Payne S.M."/>
            <person name="Runyen-Janecky L.J."/>
            <person name="Zhou S."/>
            <person name="Schwartz D.C."/>
            <person name="Blattner F.R."/>
        </authorList>
    </citation>
    <scope>NUCLEOTIDE SEQUENCE [LARGE SCALE GENOMIC DNA]</scope>
    <source>
        <strain>ATCC 700930 / 2457T / Serotype 2a</strain>
    </source>
</reference>
<gene>
    <name type="primary">yohK</name>
    <name type="ordered locus">SF2227</name>
    <name type="ordered locus">S2356</name>
</gene>
<organism>
    <name type="scientific">Shigella flexneri</name>
    <dbReference type="NCBI Taxonomy" id="623"/>
    <lineage>
        <taxon>Bacteria</taxon>
        <taxon>Pseudomonadati</taxon>
        <taxon>Pseudomonadota</taxon>
        <taxon>Gammaproteobacteria</taxon>
        <taxon>Enterobacterales</taxon>
        <taxon>Enterobacteriaceae</taxon>
        <taxon>Shigella</taxon>
    </lineage>
</organism>
<protein>
    <recommendedName>
        <fullName>Inner membrane protein YohK</fullName>
    </recommendedName>
</protein>
<dbReference type="EMBL" id="AE005674">
    <property type="protein sequence ID" value="AAN43749.1"/>
    <property type="molecule type" value="Genomic_DNA"/>
</dbReference>
<dbReference type="EMBL" id="AE014073">
    <property type="protein sequence ID" value="AAP17566.1"/>
    <property type="molecule type" value="Genomic_DNA"/>
</dbReference>
<dbReference type="RefSeq" id="NP_708042.1">
    <property type="nucleotide sequence ID" value="NC_004337.2"/>
</dbReference>
<dbReference type="RefSeq" id="WP_000968208.1">
    <property type="nucleotide sequence ID" value="NZ_WPGW01000017.1"/>
</dbReference>
<dbReference type="STRING" id="198214.SF2227"/>
<dbReference type="PaxDb" id="198214-SF2227"/>
<dbReference type="GeneID" id="1027293"/>
<dbReference type="KEGG" id="sfl:SF2227"/>
<dbReference type="KEGG" id="sfx:S2356"/>
<dbReference type="PATRIC" id="fig|198214.7.peg.2668"/>
<dbReference type="HOGENOM" id="CLU_082099_3_0_6"/>
<dbReference type="Proteomes" id="UP000001006">
    <property type="component" value="Chromosome"/>
</dbReference>
<dbReference type="Proteomes" id="UP000002673">
    <property type="component" value="Chromosome"/>
</dbReference>
<dbReference type="GO" id="GO:0005886">
    <property type="term" value="C:plasma membrane"/>
    <property type="evidence" value="ECO:0007669"/>
    <property type="project" value="UniProtKB-SubCell"/>
</dbReference>
<dbReference type="InterPro" id="IPR007300">
    <property type="entry name" value="CidB/LrgB"/>
</dbReference>
<dbReference type="InterPro" id="IPR005261">
    <property type="entry name" value="YohK-like"/>
</dbReference>
<dbReference type="NCBIfam" id="TIGR00659">
    <property type="entry name" value="CidB/LrgB family autolysis modulator"/>
    <property type="match status" value="1"/>
</dbReference>
<dbReference type="NCBIfam" id="NF007983">
    <property type="entry name" value="PRK10711.1"/>
    <property type="match status" value="1"/>
</dbReference>
<dbReference type="PANTHER" id="PTHR30249:SF0">
    <property type="entry name" value="PLASTIDAL GLYCOLATE_GLYCERATE TRANSLOCATOR 1, CHLOROPLASTIC"/>
    <property type="match status" value="1"/>
</dbReference>
<dbReference type="PANTHER" id="PTHR30249">
    <property type="entry name" value="PUTATIVE SEROTONIN TRANSPORTER"/>
    <property type="match status" value="1"/>
</dbReference>
<dbReference type="Pfam" id="PF04172">
    <property type="entry name" value="LrgB"/>
    <property type="match status" value="1"/>
</dbReference>
<keyword id="KW-0997">Cell inner membrane</keyword>
<keyword id="KW-1003">Cell membrane</keyword>
<keyword id="KW-0472">Membrane</keyword>
<keyword id="KW-1185">Reference proteome</keyword>
<keyword id="KW-0812">Transmembrane</keyword>
<keyword id="KW-1133">Transmembrane helix</keyword>
<comment type="subcellular location">
    <subcellularLocation>
        <location evidence="1">Cell inner membrane</location>
        <topology evidence="1">Multi-pass membrane protein</topology>
    </subcellularLocation>
</comment>
<comment type="similarity">
    <text evidence="3">Belongs to the YohK (E.coli)/YwbG (IPA-22R) (B.subtilis) family.</text>
</comment>
<accession>P0AD20</accession>
<accession>P33373</accession>